<evidence type="ECO:0000255" key="1">
    <source>
        <dbReference type="HAMAP-Rule" id="MF_00651"/>
    </source>
</evidence>
<evidence type="ECO:0000256" key="2">
    <source>
        <dbReference type="SAM" id="MobiDB-lite"/>
    </source>
</evidence>
<sequence length="184" mass="19922">MFSSQHRLLYQPSGPDLSKNLDPERGRRLGIDVGSVRIGVAFSDPDGILATPVETVRRYRSAKHLRRLAELVVELQVVEVVVGLPWTLTDRTGSSAKDAIDTAEALARRVAPVPVRLVDERLTTVSAQRLLRAAGVRAKDQRAVIDQAAAVVILQNWLDQCRAATPARADEPTTGSVAGEVIDG</sequence>
<feature type="chain" id="PRO_0000172093" description="Putative pre-16S rRNA nuclease">
    <location>
        <begin position="1"/>
        <end position="184"/>
    </location>
</feature>
<feature type="region of interest" description="Disordered" evidence="2">
    <location>
        <begin position="1"/>
        <end position="23"/>
    </location>
</feature>
<dbReference type="EC" id="3.1.-.-" evidence="1"/>
<dbReference type="EMBL" id="AL583918">
    <property type="protein sequence ID" value="CAC30021.1"/>
    <property type="molecule type" value="Genomic_DNA"/>
</dbReference>
<dbReference type="PIR" id="A86973">
    <property type="entry name" value="A86973"/>
</dbReference>
<dbReference type="RefSeq" id="NP_301438.1">
    <property type="nucleotide sequence ID" value="NC_002677.1"/>
</dbReference>
<dbReference type="SMR" id="Q9CCS9"/>
<dbReference type="STRING" id="272631.gene:17574334"/>
<dbReference type="KEGG" id="mle:ML0513"/>
<dbReference type="PATRIC" id="fig|272631.5.peg.902"/>
<dbReference type="Leproma" id="ML0513"/>
<dbReference type="eggNOG" id="COG0816">
    <property type="taxonomic scope" value="Bacteria"/>
</dbReference>
<dbReference type="HOGENOM" id="CLU_098240_0_1_11"/>
<dbReference type="OrthoDB" id="9790539at2"/>
<dbReference type="Proteomes" id="UP000000806">
    <property type="component" value="Chromosome"/>
</dbReference>
<dbReference type="GO" id="GO:0005829">
    <property type="term" value="C:cytosol"/>
    <property type="evidence" value="ECO:0007669"/>
    <property type="project" value="TreeGrafter"/>
</dbReference>
<dbReference type="GO" id="GO:0004518">
    <property type="term" value="F:nuclease activity"/>
    <property type="evidence" value="ECO:0007669"/>
    <property type="project" value="UniProtKB-KW"/>
</dbReference>
<dbReference type="GO" id="GO:0000967">
    <property type="term" value="P:rRNA 5'-end processing"/>
    <property type="evidence" value="ECO:0007669"/>
    <property type="project" value="UniProtKB-UniRule"/>
</dbReference>
<dbReference type="CDD" id="cd16964">
    <property type="entry name" value="YqgF"/>
    <property type="match status" value="1"/>
</dbReference>
<dbReference type="FunFam" id="3.30.420.140:FF:000005">
    <property type="entry name" value="Putative pre-16S rRNA nuclease"/>
    <property type="match status" value="1"/>
</dbReference>
<dbReference type="Gene3D" id="3.30.420.140">
    <property type="entry name" value="YqgF/RNase H-like domain"/>
    <property type="match status" value="1"/>
</dbReference>
<dbReference type="HAMAP" id="MF_00651">
    <property type="entry name" value="Nuclease_YqgF"/>
    <property type="match status" value="1"/>
</dbReference>
<dbReference type="InterPro" id="IPR012337">
    <property type="entry name" value="RNaseH-like_sf"/>
</dbReference>
<dbReference type="InterPro" id="IPR005227">
    <property type="entry name" value="YqgF"/>
</dbReference>
<dbReference type="InterPro" id="IPR006641">
    <property type="entry name" value="YqgF/RNaseH-like_dom"/>
</dbReference>
<dbReference type="InterPro" id="IPR037027">
    <property type="entry name" value="YqgF/RNaseH-like_dom_sf"/>
</dbReference>
<dbReference type="NCBIfam" id="TIGR00250">
    <property type="entry name" value="RNAse_H_YqgF"/>
    <property type="match status" value="1"/>
</dbReference>
<dbReference type="PANTHER" id="PTHR33317">
    <property type="entry name" value="POLYNUCLEOTIDYL TRANSFERASE, RIBONUCLEASE H-LIKE SUPERFAMILY PROTEIN"/>
    <property type="match status" value="1"/>
</dbReference>
<dbReference type="PANTHER" id="PTHR33317:SF4">
    <property type="entry name" value="POLYNUCLEOTIDYL TRANSFERASE, RIBONUCLEASE H-LIKE SUPERFAMILY PROTEIN"/>
    <property type="match status" value="1"/>
</dbReference>
<dbReference type="Pfam" id="PF03652">
    <property type="entry name" value="RuvX"/>
    <property type="match status" value="1"/>
</dbReference>
<dbReference type="SMART" id="SM00732">
    <property type="entry name" value="YqgFc"/>
    <property type="match status" value="1"/>
</dbReference>
<dbReference type="SUPFAM" id="SSF53098">
    <property type="entry name" value="Ribonuclease H-like"/>
    <property type="match status" value="1"/>
</dbReference>
<comment type="function">
    <text evidence="1">Could be a nuclease involved in processing of the 5'-end of pre-16S rRNA.</text>
</comment>
<comment type="subcellular location">
    <subcellularLocation>
        <location evidence="1">Cytoplasm</location>
    </subcellularLocation>
</comment>
<comment type="similarity">
    <text evidence="1">Belongs to the YqgF nuclease family.</text>
</comment>
<accession>Q9CCS9</accession>
<protein>
    <recommendedName>
        <fullName evidence="1">Putative pre-16S rRNA nuclease</fullName>
        <ecNumber evidence="1">3.1.-.-</ecNumber>
    </recommendedName>
</protein>
<name>YQGF_MYCLE</name>
<organism>
    <name type="scientific">Mycobacterium leprae (strain TN)</name>
    <dbReference type="NCBI Taxonomy" id="272631"/>
    <lineage>
        <taxon>Bacteria</taxon>
        <taxon>Bacillati</taxon>
        <taxon>Actinomycetota</taxon>
        <taxon>Actinomycetes</taxon>
        <taxon>Mycobacteriales</taxon>
        <taxon>Mycobacteriaceae</taxon>
        <taxon>Mycobacterium</taxon>
    </lineage>
</organism>
<reference key="1">
    <citation type="journal article" date="2001" name="Nature">
        <title>Massive gene decay in the leprosy bacillus.</title>
        <authorList>
            <person name="Cole S.T."/>
            <person name="Eiglmeier K."/>
            <person name="Parkhill J."/>
            <person name="James K.D."/>
            <person name="Thomson N.R."/>
            <person name="Wheeler P.R."/>
            <person name="Honore N."/>
            <person name="Garnier T."/>
            <person name="Churcher C.M."/>
            <person name="Harris D.E."/>
            <person name="Mungall K.L."/>
            <person name="Basham D."/>
            <person name="Brown D."/>
            <person name="Chillingworth T."/>
            <person name="Connor R."/>
            <person name="Davies R.M."/>
            <person name="Devlin K."/>
            <person name="Duthoy S."/>
            <person name="Feltwell T."/>
            <person name="Fraser A."/>
            <person name="Hamlin N."/>
            <person name="Holroyd S."/>
            <person name="Hornsby T."/>
            <person name="Jagels K."/>
            <person name="Lacroix C."/>
            <person name="Maclean J."/>
            <person name="Moule S."/>
            <person name="Murphy L.D."/>
            <person name="Oliver K."/>
            <person name="Quail M.A."/>
            <person name="Rajandream M.A."/>
            <person name="Rutherford K.M."/>
            <person name="Rutter S."/>
            <person name="Seeger K."/>
            <person name="Simon S."/>
            <person name="Simmonds M."/>
            <person name="Skelton J."/>
            <person name="Squares R."/>
            <person name="Squares S."/>
            <person name="Stevens K."/>
            <person name="Taylor K."/>
            <person name="Whitehead S."/>
            <person name="Woodward J.R."/>
            <person name="Barrell B.G."/>
        </authorList>
    </citation>
    <scope>NUCLEOTIDE SEQUENCE [LARGE SCALE GENOMIC DNA]</scope>
    <source>
        <strain>TN</strain>
    </source>
</reference>
<proteinExistence type="inferred from homology"/>
<gene>
    <name type="ordered locus">ML0513</name>
</gene>
<keyword id="KW-0963">Cytoplasm</keyword>
<keyword id="KW-0378">Hydrolase</keyword>
<keyword id="KW-0540">Nuclease</keyword>
<keyword id="KW-1185">Reference proteome</keyword>
<keyword id="KW-0690">Ribosome biogenesis</keyword>